<keyword id="KW-0535">Nitrogen fixation</keyword>
<keyword id="KW-0614">Plasmid</keyword>
<keyword id="KW-1185">Reference proteome</keyword>
<feature type="chain" id="PRO_0000087264" description="Protein FixU homolog">
    <location>
        <begin position="1"/>
        <end position="76"/>
    </location>
</feature>
<gene>
    <name type="primary">fixU</name>
    <name type="ordered locus">NGR_a01300</name>
    <name type="ORF">y4uJ</name>
</gene>
<geneLocation type="plasmid">
    <name>sym pNGR234a</name>
</geneLocation>
<sequence length="76" mass="8505">MRVTIRRSGSGLSAYVPKKDIEEPIVKVENESLWGGFVVLRNGWRLLLPDLPEDTSLPVTVEARKIVNDAARKETS</sequence>
<comment type="similarity">
    <text evidence="1">To R.leguminosarum Sym plasmid FixU. Also to the N-terminal of R.meliloti MosB protein.</text>
</comment>
<evidence type="ECO:0000305" key="1"/>
<organism>
    <name type="scientific">Sinorhizobium fredii (strain NBRC 101917 / NGR234)</name>
    <dbReference type="NCBI Taxonomy" id="394"/>
    <lineage>
        <taxon>Bacteria</taxon>
        <taxon>Pseudomonadati</taxon>
        <taxon>Pseudomonadota</taxon>
        <taxon>Alphaproteobacteria</taxon>
        <taxon>Hyphomicrobiales</taxon>
        <taxon>Rhizobiaceae</taxon>
        <taxon>Sinorhizobium/Ensifer group</taxon>
        <taxon>Sinorhizobium</taxon>
    </lineage>
</organism>
<reference key="1">
    <citation type="journal article" date="1996" name="Genome Res.">
        <title>Sequencing the 500-kb GC-rich symbiotic replicon of Rhizobium sp. NGR234 using dye terminators and a thermostable 'sequenase': a beginning.</title>
        <authorList>
            <person name="Freiberg C."/>
            <person name="Perret X."/>
            <person name="Broughton W.J."/>
            <person name="Rosenthal A."/>
        </authorList>
    </citation>
    <scope>NUCLEOTIDE SEQUENCE [GENOMIC DNA]</scope>
</reference>
<reference key="2">
    <citation type="journal article" date="1997" name="Nature">
        <title>Molecular basis of symbiosis between Rhizobium and legumes.</title>
        <authorList>
            <person name="Freiberg C.A."/>
            <person name="Fellay R."/>
            <person name="Bairoch A."/>
            <person name="Broughton W.J."/>
            <person name="Rosenthal A."/>
            <person name="Perret X."/>
        </authorList>
    </citation>
    <scope>NUCLEOTIDE SEQUENCE [LARGE SCALE GENOMIC DNA]</scope>
    <source>
        <strain>NBRC 101917 / NGR234</strain>
    </source>
</reference>
<reference key="3">
    <citation type="journal article" date="2009" name="Appl. Environ. Microbiol.">
        <title>Rhizobium sp. strain NGR234 possesses a remarkable number of secretion systems.</title>
        <authorList>
            <person name="Schmeisser C."/>
            <person name="Liesegang H."/>
            <person name="Krysciak D."/>
            <person name="Bakkou N."/>
            <person name="Le Quere A."/>
            <person name="Wollherr A."/>
            <person name="Heinemeyer I."/>
            <person name="Morgenstern B."/>
            <person name="Pommerening-Roeser A."/>
            <person name="Flores M."/>
            <person name="Palacios R."/>
            <person name="Brenner S."/>
            <person name="Gottschalk G."/>
            <person name="Schmitz R.A."/>
            <person name="Broughton W.J."/>
            <person name="Perret X."/>
            <person name="Strittmatter A.W."/>
            <person name="Streit W.R."/>
        </authorList>
    </citation>
    <scope>NUCLEOTIDE SEQUENCE [LARGE SCALE GENOMIC DNA]</scope>
    <source>
        <strain>NBRC 101917 / NGR234</strain>
    </source>
</reference>
<dbReference type="EMBL" id="Z68203">
    <property type="protein sequence ID" value="CAA92409.1"/>
    <property type="molecule type" value="Genomic_DNA"/>
</dbReference>
<dbReference type="EMBL" id="U00090">
    <property type="protein sequence ID" value="AAB91882.1"/>
    <property type="molecule type" value="Genomic_DNA"/>
</dbReference>
<dbReference type="RefSeq" id="NP_444095.1">
    <property type="nucleotide sequence ID" value="NC_000914.2"/>
</dbReference>
<dbReference type="RefSeq" id="WP_010875168.1">
    <property type="nucleotide sequence ID" value="NC_000914.2"/>
</dbReference>
<dbReference type="SMR" id="Q53202"/>
<dbReference type="KEGG" id="rhi:NGR_a01300"/>
<dbReference type="eggNOG" id="COG5554">
    <property type="taxonomic scope" value="Bacteria"/>
</dbReference>
<dbReference type="HOGENOM" id="CLU_195869_1_0_5"/>
<dbReference type="OrthoDB" id="9805052at2"/>
<dbReference type="Proteomes" id="UP000001054">
    <property type="component" value="Plasmid pNGR234a"/>
</dbReference>
<dbReference type="GO" id="GO:0009399">
    <property type="term" value="P:nitrogen fixation"/>
    <property type="evidence" value="ECO:0007669"/>
    <property type="project" value="UniProtKB-KW"/>
</dbReference>
<dbReference type="Gene3D" id="2.40.50.240">
    <property type="entry name" value="NifT/FixU-like"/>
    <property type="match status" value="1"/>
</dbReference>
<dbReference type="InterPro" id="IPR009727">
    <property type="entry name" value="NifT"/>
</dbReference>
<dbReference type="InterPro" id="IPR024044">
    <property type="entry name" value="NifT/FixU_barrel-like_dom_sf"/>
</dbReference>
<dbReference type="NCBIfam" id="TIGR02934">
    <property type="entry name" value="nifT_nitrog"/>
    <property type="match status" value="1"/>
</dbReference>
<dbReference type="Pfam" id="PF06988">
    <property type="entry name" value="NifT"/>
    <property type="match status" value="1"/>
</dbReference>
<dbReference type="SUPFAM" id="SSF159203">
    <property type="entry name" value="NifT/FixU-like"/>
    <property type="match status" value="1"/>
</dbReference>
<accession>Q53202</accession>
<protein>
    <recommendedName>
        <fullName>Protein FixU homolog</fullName>
    </recommendedName>
</protein>
<name>FIXU_SINFN</name>
<proteinExistence type="predicted"/>